<organism>
    <name type="scientific">Mycoplasma genitalium (strain ATCC 33530 / DSM 19775 / NCTC 10195 / G37)</name>
    <name type="common">Mycoplasmoides genitalium</name>
    <dbReference type="NCBI Taxonomy" id="243273"/>
    <lineage>
        <taxon>Bacteria</taxon>
        <taxon>Bacillati</taxon>
        <taxon>Mycoplasmatota</taxon>
        <taxon>Mycoplasmoidales</taxon>
        <taxon>Mycoplasmoidaceae</taxon>
        <taxon>Mycoplasmoides</taxon>
    </lineage>
</organism>
<comment type="function">
    <text evidence="1">Excises uracil residues from the DNA which can arise as a result of misincorporation of dUMP residues by DNA polymerase or due to deamination of cytosine.</text>
</comment>
<comment type="catalytic activity">
    <reaction>
        <text>Hydrolyzes single-stranded DNA or mismatched double-stranded DNA and polynucleotides, releasing free uracil.</text>
        <dbReference type="EC" id="3.2.2.27"/>
    </reaction>
</comment>
<comment type="subcellular location">
    <subcellularLocation>
        <location evidence="1">Cytoplasm</location>
    </subcellularLocation>
</comment>
<comment type="similarity">
    <text evidence="2">Belongs to the uracil-DNA glycosylase (UDG) superfamily. UNG family.</text>
</comment>
<sequence>MVMDDLFQRMVSCVLPSWRAFIDEEVKKPYFQALLEKLKALKATIIPKPELIFRVFSFFKPIDTKVIIFGQDPYPSPNDACGLAFASNNSKTPASLKRIILRLEKEYPSLKQESSWQQNFLLNWAEQGVLLLNGILTTTVFIRNAHKNWGWEEFNCNLLTFLKNQNIKPLLVFLGVQTKNFVVKSIGNVDGFEHLSYPHPSPLSGNLFLTNPNDLFKTINNWLKQHNQKIINWAVVKNASFDQLS</sequence>
<feature type="chain" id="PRO_0000176115" description="Uracil-DNA glycosylase">
    <location>
        <begin position="1"/>
        <end position="245"/>
    </location>
</feature>
<feature type="active site" description="Proton acceptor" evidence="1">
    <location>
        <position position="72"/>
    </location>
</feature>
<feature type="sequence conflict" description="In Ref. 2." evidence="2" ref="2">
    <original>EHLSYPHPSPLSG</original>
    <variation>GAFIISPSLTTKC</variation>
    <location>
        <begin position="193"/>
        <end position="205"/>
    </location>
</feature>
<evidence type="ECO:0000250" key="1"/>
<evidence type="ECO:0000305" key="2"/>
<protein>
    <recommendedName>
        <fullName>Uracil-DNA glycosylase</fullName>
        <shortName>UDG</shortName>
        <ecNumber>3.2.2.27</ecNumber>
    </recommendedName>
</protein>
<name>UNG_MYCGE</name>
<dbReference type="EC" id="3.2.2.27"/>
<dbReference type="EMBL" id="L43967">
    <property type="protein sequence ID" value="AAC71315.1"/>
    <property type="molecule type" value="Genomic_DNA"/>
</dbReference>
<dbReference type="EMBL" id="U02201">
    <property type="protein sequence ID" value="AAD12490.1"/>
    <property type="molecule type" value="Genomic_DNA"/>
</dbReference>
<dbReference type="PIR" id="G64210">
    <property type="entry name" value="G64210"/>
</dbReference>
<dbReference type="SMR" id="P47343"/>
<dbReference type="FunCoup" id="P47343">
    <property type="interactions" value="151"/>
</dbReference>
<dbReference type="STRING" id="243273.MG_097"/>
<dbReference type="KEGG" id="mge:MG_097"/>
<dbReference type="eggNOG" id="COG0692">
    <property type="taxonomic scope" value="Bacteria"/>
</dbReference>
<dbReference type="HOGENOM" id="CLU_032162_3_2_14"/>
<dbReference type="InParanoid" id="P47343"/>
<dbReference type="Proteomes" id="UP000000807">
    <property type="component" value="Chromosome"/>
</dbReference>
<dbReference type="GO" id="GO:0005737">
    <property type="term" value="C:cytoplasm"/>
    <property type="evidence" value="ECO:0007669"/>
    <property type="project" value="UniProtKB-SubCell"/>
</dbReference>
<dbReference type="GO" id="GO:0004844">
    <property type="term" value="F:uracil DNA N-glycosylase activity"/>
    <property type="evidence" value="ECO:0007669"/>
    <property type="project" value="UniProtKB-UniRule"/>
</dbReference>
<dbReference type="GO" id="GO:0097510">
    <property type="term" value="P:base-excision repair, AP site formation via deaminated base removal"/>
    <property type="evidence" value="ECO:0000318"/>
    <property type="project" value="GO_Central"/>
</dbReference>
<dbReference type="CDD" id="cd10027">
    <property type="entry name" value="UDG-F1-like"/>
    <property type="match status" value="1"/>
</dbReference>
<dbReference type="Gene3D" id="3.40.470.10">
    <property type="entry name" value="Uracil-DNA glycosylase-like domain"/>
    <property type="match status" value="1"/>
</dbReference>
<dbReference type="HAMAP" id="MF_00148">
    <property type="entry name" value="UDG"/>
    <property type="match status" value="1"/>
</dbReference>
<dbReference type="InterPro" id="IPR002043">
    <property type="entry name" value="UDG_fam1"/>
</dbReference>
<dbReference type="InterPro" id="IPR018085">
    <property type="entry name" value="Ura-DNA_Glyclase_AS"/>
</dbReference>
<dbReference type="InterPro" id="IPR005122">
    <property type="entry name" value="Uracil-DNA_glycosylase-like"/>
</dbReference>
<dbReference type="InterPro" id="IPR036895">
    <property type="entry name" value="Uracil-DNA_glycosylase-like_sf"/>
</dbReference>
<dbReference type="NCBIfam" id="NF003592">
    <property type="entry name" value="PRK05254.1-5"/>
    <property type="match status" value="1"/>
</dbReference>
<dbReference type="NCBIfam" id="TIGR00628">
    <property type="entry name" value="ung"/>
    <property type="match status" value="1"/>
</dbReference>
<dbReference type="PANTHER" id="PTHR11264">
    <property type="entry name" value="URACIL-DNA GLYCOSYLASE"/>
    <property type="match status" value="1"/>
</dbReference>
<dbReference type="PANTHER" id="PTHR11264:SF0">
    <property type="entry name" value="URACIL-DNA GLYCOSYLASE"/>
    <property type="match status" value="1"/>
</dbReference>
<dbReference type="Pfam" id="PF03167">
    <property type="entry name" value="UDG"/>
    <property type="match status" value="1"/>
</dbReference>
<dbReference type="SMART" id="SM00986">
    <property type="entry name" value="UDG"/>
    <property type="match status" value="1"/>
</dbReference>
<dbReference type="SMART" id="SM00987">
    <property type="entry name" value="UreE_C"/>
    <property type="match status" value="1"/>
</dbReference>
<dbReference type="SUPFAM" id="SSF52141">
    <property type="entry name" value="Uracil-DNA glycosylase-like"/>
    <property type="match status" value="1"/>
</dbReference>
<dbReference type="PROSITE" id="PS00130">
    <property type="entry name" value="U_DNA_GLYCOSYLASE"/>
    <property type="match status" value="1"/>
</dbReference>
<accession>P47343</accession>
<accession>Q49318</accession>
<gene>
    <name type="primary">ung</name>
    <name type="ordered locus">MG097</name>
</gene>
<reference key="1">
    <citation type="journal article" date="1995" name="Science">
        <title>The minimal gene complement of Mycoplasma genitalium.</title>
        <authorList>
            <person name="Fraser C.M."/>
            <person name="Gocayne J.D."/>
            <person name="White O."/>
            <person name="Adams M.D."/>
            <person name="Clayton R.A."/>
            <person name="Fleischmann R.D."/>
            <person name="Bult C.J."/>
            <person name="Kerlavage A.R."/>
            <person name="Sutton G.G."/>
            <person name="Kelley J.M."/>
            <person name="Fritchman J.L."/>
            <person name="Weidman J.F."/>
            <person name="Small K.V."/>
            <person name="Sandusky M."/>
            <person name="Fuhrmann J.L."/>
            <person name="Nguyen D.T."/>
            <person name="Utterback T.R."/>
            <person name="Saudek D.M."/>
            <person name="Phillips C.A."/>
            <person name="Merrick J.M."/>
            <person name="Tomb J.-F."/>
            <person name="Dougherty B.A."/>
            <person name="Bott K.F."/>
            <person name="Hu P.-C."/>
            <person name="Lucier T.S."/>
            <person name="Peterson S.N."/>
            <person name="Smith H.O."/>
            <person name="Hutchison C.A. III"/>
            <person name="Venter J.C."/>
        </authorList>
    </citation>
    <scope>NUCLEOTIDE SEQUENCE [LARGE SCALE GENOMIC DNA]</scope>
    <source>
        <strain>ATCC 33530 / DSM 19775 / NCTC 10195 / G37</strain>
    </source>
</reference>
<reference key="2">
    <citation type="journal article" date="1993" name="J. Bacteriol.">
        <title>A survey of the Mycoplasma genitalium genome by using random sequencing.</title>
        <authorList>
            <person name="Peterson S.N."/>
            <person name="Hu P.-C."/>
            <person name="Bott K.F."/>
            <person name="Hutchison C.A. III"/>
        </authorList>
    </citation>
    <scope>NUCLEOTIDE SEQUENCE [GENOMIC DNA] OF 74-231</scope>
    <source>
        <strain>ATCC 33530 / DSM 19775 / NCTC 10195 / G37</strain>
    </source>
</reference>
<proteinExistence type="inferred from homology"/>
<keyword id="KW-0963">Cytoplasm</keyword>
<keyword id="KW-0227">DNA damage</keyword>
<keyword id="KW-0234">DNA repair</keyword>
<keyword id="KW-0378">Hydrolase</keyword>
<keyword id="KW-1185">Reference proteome</keyword>